<keyword id="KW-0067">ATP-binding</keyword>
<keyword id="KW-0963">Cytoplasm</keyword>
<keyword id="KW-0436">Ligase</keyword>
<keyword id="KW-0547">Nucleotide-binding</keyword>
<keyword id="KW-0658">Purine biosynthesis</keyword>
<protein>
    <recommendedName>
        <fullName evidence="1">Phosphoribosylformylglycinamidine cyclo-ligase</fullName>
        <ecNumber evidence="1">6.3.3.1</ecNumber>
    </recommendedName>
    <alternativeName>
        <fullName evidence="1">AIR synthase</fullName>
    </alternativeName>
    <alternativeName>
        <fullName evidence="1">AIRS</fullName>
    </alternativeName>
    <alternativeName>
        <fullName evidence="1">Phosphoribosyl-aminoimidazole synthetase</fullName>
    </alternativeName>
</protein>
<feature type="chain" id="PRO_1000192996" description="Phosphoribosylformylglycinamidine cyclo-ligase">
    <location>
        <begin position="1"/>
        <end position="346"/>
    </location>
</feature>
<comment type="catalytic activity">
    <reaction evidence="1">
        <text>2-formamido-N(1)-(5-O-phospho-beta-D-ribosyl)acetamidine + ATP = 5-amino-1-(5-phospho-beta-D-ribosyl)imidazole + ADP + phosphate + H(+)</text>
        <dbReference type="Rhea" id="RHEA:23032"/>
        <dbReference type="ChEBI" id="CHEBI:15378"/>
        <dbReference type="ChEBI" id="CHEBI:30616"/>
        <dbReference type="ChEBI" id="CHEBI:43474"/>
        <dbReference type="ChEBI" id="CHEBI:137981"/>
        <dbReference type="ChEBI" id="CHEBI:147287"/>
        <dbReference type="ChEBI" id="CHEBI:456216"/>
        <dbReference type="EC" id="6.3.3.1"/>
    </reaction>
</comment>
<comment type="pathway">
    <text evidence="1">Purine metabolism; IMP biosynthesis via de novo pathway; 5-amino-1-(5-phospho-D-ribosyl)imidazole from N(2)-formyl-N(1)-(5-phospho-D-ribosyl)glycinamide: step 2/2.</text>
</comment>
<comment type="subcellular location">
    <subcellularLocation>
        <location evidence="1">Cytoplasm</location>
    </subcellularLocation>
</comment>
<comment type="similarity">
    <text evidence="1">Belongs to the AIR synthase family.</text>
</comment>
<name>PUR5_BACMK</name>
<sequence length="346" mass="37363">MANAYKQAGVDIEAGYEAVSRMKKHVQTTMRKEVLGGLGGFGGMFDLSKFALEEPVLVSGTDGVGTKLMLAFMADKHDTIGIDAVAMCVNDIVVQGAEPLFFLDYIACGKAEPSKIENIVKGISEGCRQAGCALIGGETAEMPGMYSTEEYDLAGFTVGIVDKKKIVTGEKIEAGHVLIGLASSGIHSNGYSLVRKVLLEDGELSLDRIYGRLELPLGEELLKPTKIYVKPILELLKKHEVYGMAHITGGGFIENIPRMLPEGIGAEIELGSWQVQPIFSLLQEVGKLEEKEMFNIFNMGIGMVVAVKEEEAKDIVRLLEEQGEKAHIIGHTVQGSGVTFIEGTEV</sequence>
<gene>
    <name evidence="1" type="primary">purM</name>
    <name type="ordered locus">BcerKBAB4_0277</name>
</gene>
<proteinExistence type="inferred from homology"/>
<organism>
    <name type="scientific">Bacillus mycoides (strain KBAB4)</name>
    <name type="common">Bacillus weihenstephanensis</name>
    <dbReference type="NCBI Taxonomy" id="315730"/>
    <lineage>
        <taxon>Bacteria</taxon>
        <taxon>Bacillati</taxon>
        <taxon>Bacillota</taxon>
        <taxon>Bacilli</taxon>
        <taxon>Bacillales</taxon>
        <taxon>Bacillaceae</taxon>
        <taxon>Bacillus</taxon>
        <taxon>Bacillus cereus group</taxon>
    </lineage>
</organism>
<dbReference type="EC" id="6.3.3.1" evidence="1"/>
<dbReference type="EMBL" id="CP000903">
    <property type="protein sequence ID" value="ABY41543.1"/>
    <property type="molecule type" value="Genomic_DNA"/>
</dbReference>
<dbReference type="RefSeq" id="WP_002010019.1">
    <property type="nucleotide sequence ID" value="NZ_CAKMRX030000136.1"/>
</dbReference>
<dbReference type="SMR" id="A9VRF3"/>
<dbReference type="KEGG" id="bwe:BcerKBAB4_0277"/>
<dbReference type="eggNOG" id="COG0150">
    <property type="taxonomic scope" value="Bacteria"/>
</dbReference>
<dbReference type="HOGENOM" id="CLU_047116_0_0_9"/>
<dbReference type="UniPathway" id="UPA00074">
    <property type="reaction ID" value="UER00129"/>
</dbReference>
<dbReference type="Proteomes" id="UP000002154">
    <property type="component" value="Chromosome"/>
</dbReference>
<dbReference type="GO" id="GO:0005829">
    <property type="term" value="C:cytosol"/>
    <property type="evidence" value="ECO:0007669"/>
    <property type="project" value="TreeGrafter"/>
</dbReference>
<dbReference type="GO" id="GO:0005524">
    <property type="term" value="F:ATP binding"/>
    <property type="evidence" value="ECO:0007669"/>
    <property type="project" value="UniProtKB-KW"/>
</dbReference>
<dbReference type="GO" id="GO:0004637">
    <property type="term" value="F:phosphoribosylamine-glycine ligase activity"/>
    <property type="evidence" value="ECO:0007669"/>
    <property type="project" value="TreeGrafter"/>
</dbReference>
<dbReference type="GO" id="GO:0004641">
    <property type="term" value="F:phosphoribosylformylglycinamidine cyclo-ligase activity"/>
    <property type="evidence" value="ECO:0007669"/>
    <property type="project" value="UniProtKB-UniRule"/>
</dbReference>
<dbReference type="GO" id="GO:0006189">
    <property type="term" value="P:'de novo' IMP biosynthetic process"/>
    <property type="evidence" value="ECO:0007669"/>
    <property type="project" value="UniProtKB-UniRule"/>
</dbReference>
<dbReference type="GO" id="GO:0046084">
    <property type="term" value="P:adenine biosynthetic process"/>
    <property type="evidence" value="ECO:0007669"/>
    <property type="project" value="TreeGrafter"/>
</dbReference>
<dbReference type="CDD" id="cd02196">
    <property type="entry name" value="PurM"/>
    <property type="match status" value="1"/>
</dbReference>
<dbReference type="FunFam" id="3.30.1330.10:FF:000001">
    <property type="entry name" value="Phosphoribosylformylglycinamidine cyclo-ligase"/>
    <property type="match status" value="1"/>
</dbReference>
<dbReference type="FunFam" id="3.90.650.10:FF:000001">
    <property type="entry name" value="Phosphoribosylformylglycinamidine cyclo-ligase"/>
    <property type="match status" value="1"/>
</dbReference>
<dbReference type="Gene3D" id="3.90.650.10">
    <property type="entry name" value="PurM-like C-terminal domain"/>
    <property type="match status" value="1"/>
</dbReference>
<dbReference type="Gene3D" id="3.30.1330.10">
    <property type="entry name" value="PurM-like, N-terminal domain"/>
    <property type="match status" value="1"/>
</dbReference>
<dbReference type="HAMAP" id="MF_00741">
    <property type="entry name" value="AIRS"/>
    <property type="match status" value="1"/>
</dbReference>
<dbReference type="InterPro" id="IPR010918">
    <property type="entry name" value="PurM-like_C_dom"/>
</dbReference>
<dbReference type="InterPro" id="IPR036676">
    <property type="entry name" value="PurM-like_C_sf"/>
</dbReference>
<dbReference type="InterPro" id="IPR016188">
    <property type="entry name" value="PurM-like_N"/>
</dbReference>
<dbReference type="InterPro" id="IPR036921">
    <property type="entry name" value="PurM-like_N_sf"/>
</dbReference>
<dbReference type="InterPro" id="IPR004733">
    <property type="entry name" value="PurM_cligase"/>
</dbReference>
<dbReference type="NCBIfam" id="TIGR00878">
    <property type="entry name" value="purM"/>
    <property type="match status" value="1"/>
</dbReference>
<dbReference type="PANTHER" id="PTHR10520:SF12">
    <property type="entry name" value="TRIFUNCTIONAL PURINE BIOSYNTHETIC PROTEIN ADENOSINE-3"/>
    <property type="match status" value="1"/>
</dbReference>
<dbReference type="PANTHER" id="PTHR10520">
    <property type="entry name" value="TRIFUNCTIONAL PURINE BIOSYNTHETIC PROTEIN ADENOSINE-3-RELATED"/>
    <property type="match status" value="1"/>
</dbReference>
<dbReference type="Pfam" id="PF00586">
    <property type="entry name" value="AIRS"/>
    <property type="match status" value="1"/>
</dbReference>
<dbReference type="Pfam" id="PF02769">
    <property type="entry name" value="AIRS_C"/>
    <property type="match status" value="1"/>
</dbReference>
<dbReference type="SUPFAM" id="SSF56042">
    <property type="entry name" value="PurM C-terminal domain-like"/>
    <property type="match status" value="1"/>
</dbReference>
<dbReference type="SUPFAM" id="SSF55326">
    <property type="entry name" value="PurM N-terminal domain-like"/>
    <property type="match status" value="1"/>
</dbReference>
<evidence type="ECO:0000255" key="1">
    <source>
        <dbReference type="HAMAP-Rule" id="MF_00741"/>
    </source>
</evidence>
<reference key="1">
    <citation type="journal article" date="2008" name="Chem. Biol. Interact.">
        <title>Extending the Bacillus cereus group genomics to putative food-borne pathogens of different toxicity.</title>
        <authorList>
            <person name="Lapidus A."/>
            <person name="Goltsman E."/>
            <person name="Auger S."/>
            <person name="Galleron N."/>
            <person name="Segurens B."/>
            <person name="Dossat C."/>
            <person name="Land M.L."/>
            <person name="Broussolle V."/>
            <person name="Brillard J."/>
            <person name="Guinebretiere M.-H."/>
            <person name="Sanchis V."/>
            <person name="Nguen-the C."/>
            <person name="Lereclus D."/>
            <person name="Richardson P."/>
            <person name="Wincker P."/>
            <person name="Weissenbach J."/>
            <person name="Ehrlich S.D."/>
            <person name="Sorokin A."/>
        </authorList>
    </citation>
    <scope>NUCLEOTIDE SEQUENCE [LARGE SCALE GENOMIC DNA]</scope>
    <source>
        <strain>KBAB4</strain>
    </source>
</reference>
<accession>A9VRF3</accession>